<comment type="function">
    <text evidence="1">Component of the spliceosomal U1 snRNP, which is essential for recognition of the pre-mRNA 5' splice-site and the subsequent assembly of the spliceosome. U1-C is directly involved in initial 5' splice-site recognition for both constitutive and regulated alternative splicing. The interaction with the 5' splice-site seems to precede base-pairing between the pre-mRNA and the U1 snRNA. Stimulates commitment or early (E) complex formation by stabilizing the base pairing of the 5' end of the U1 snRNA and the 5' splice-site region.</text>
</comment>
<comment type="subunit">
    <text evidence="1">U1 snRNP is composed of the 7 core Sm proteins B/B', D1, D2, D3, E, F and G that assemble in a heptameric protein ring on the Sm site of the small nuclear RNA to form the core snRNP, and at least 3 U1 snRNP-specific proteins U1-70K, U1-A and U1-C. U1-C interacts with U1 snRNA and the 5' splice-site region of the pre-mRNA.</text>
</comment>
<comment type="subcellular location">
    <subcellularLocation>
        <location evidence="1">Nucleus</location>
    </subcellularLocation>
</comment>
<comment type="similarity">
    <text evidence="1">Belongs to the U1 small nuclear ribonucleoprotein C family.</text>
</comment>
<proteinExistence type="inferred from homology"/>
<feature type="chain" id="PRO_0000414282" description="U1 small nuclear ribonucleoprotein C">
    <location>
        <begin position="1"/>
        <end position="242"/>
    </location>
</feature>
<feature type="zinc finger region" description="Matrin-type; degenerate" evidence="1">
    <location>
        <begin position="3"/>
        <end position="35"/>
    </location>
</feature>
<feature type="region of interest" description="Disordered" evidence="2">
    <location>
        <begin position="60"/>
        <end position="242"/>
    </location>
</feature>
<feature type="compositionally biased region" description="Pro residues" evidence="2">
    <location>
        <begin position="90"/>
        <end position="107"/>
    </location>
</feature>
<feature type="compositionally biased region" description="Pro residues" evidence="2">
    <location>
        <begin position="136"/>
        <end position="149"/>
    </location>
</feature>
<feature type="compositionally biased region" description="Pro residues" evidence="2">
    <location>
        <begin position="156"/>
        <end position="183"/>
    </location>
</feature>
<feature type="compositionally biased region" description="Pro residues" evidence="2">
    <location>
        <begin position="201"/>
        <end position="213"/>
    </location>
</feature>
<feature type="compositionally biased region" description="Polar residues" evidence="2">
    <location>
        <begin position="231"/>
        <end position="242"/>
    </location>
</feature>
<protein>
    <recommendedName>
        <fullName evidence="1">U1 small nuclear ribonucleoprotein C</fullName>
        <shortName evidence="1">U1 snRNP C</shortName>
        <shortName evidence="1">U1-C</shortName>
        <shortName evidence="1">U1C</shortName>
    </recommendedName>
</protein>
<keyword id="KW-0479">Metal-binding</keyword>
<keyword id="KW-0539">Nucleus</keyword>
<keyword id="KW-1185">Reference proteome</keyword>
<keyword id="KW-0687">Ribonucleoprotein</keyword>
<keyword id="KW-0694">RNA-binding</keyword>
<keyword id="KW-0862">Zinc</keyword>
<keyword id="KW-0863">Zinc-finger</keyword>
<dbReference type="EMBL" id="GG663367">
    <property type="protein sequence ID" value="EEH07333.1"/>
    <property type="molecule type" value="Genomic_DNA"/>
</dbReference>
<dbReference type="RefSeq" id="XP_045287814.1">
    <property type="nucleotide sequence ID" value="XM_045431261.1"/>
</dbReference>
<dbReference type="SMR" id="C0NN85"/>
<dbReference type="STRING" id="447093.C0NN85"/>
<dbReference type="GeneID" id="69037228"/>
<dbReference type="VEuPathDB" id="FungiDB:I7I50_11667"/>
<dbReference type="HOGENOM" id="CLU_079697_2_0_1"/>
<dbReference type="InParanoid" id="C0NN85"/>
<dbReference type="Proteomes" id="UP000001631">
    <property type="component" value="Unassembled WGS sequence"/>
</dbReference>
<dbReference type="GO" id="GO:0000243">
    <property type="term" value="C:commitment complex"/>
    <property type="evidence" value="ECO:0007669"/>
    <property type="project" value="UniProtKB-UniRule"/>
</dbReference>
<dbReference type="GO" id="GO:0005685">
    <property type="term" value="C:U1 snRNP"/>
    <property type="evidence" value="ECO:0007669"/>
    <property type="project" value="UniProtKB-UniRule"/>
</dbReference>
<dbReference type="GO" id="GO:0071004">
    <property type="term" value="C:U2-type prespliceosome"/>
    <property type="evidence" value="ECO:0007669"/>
    <property type="project" value="UniProtKB-UniRule"/>
</dbReference>
<dbReference type="GO" id="GO:0003729">
    <property type="term" value="F:mRNA binding"/>
    <property type="evidence" value="ECO:0007669"/>
    <property type="project" value="UniProtKB-UniRule"/>
</dbReference>
<dbReference type="GO" id="GO:0030627">
    <property type="term" value="F:pre-mRNA 5'-splice site binding"/>
    <property type="evidence" value="ECO:0007669"/>
    <property type="project" value="InterPro"/>
</dbReference>
<dbReference type="GO" id="GO:0030619">
    <property type="term" value="F:U1 snRNA binding"/>
    <property type="evidence" value="ECO:0007669"/>
    <property type="project" value="UniProtKB-UniRule"/>
</dbReference>
<dbReference type="GO" id="GO:0008270">
    <property type="term" value="F:zinc ion binding"/>
    <property type="evidence" value="ECO:0007669"/>
    <property type="project" value="UniProtKB-UniRule"/>
</dbReference>
<dbReference type="GO" id="GO:0000395">
    <property type="term" value="P:mRNA 5'-splice site recognition"/>
    <property type="evidence" value="ECO:0007669"/>
    <property type="project" value="UniProtKB-UniRule"/>
</dbReference>
<dbReference type="GO" id="GO:0000387">
    <property type="term" value="P:spliceosomal snRNP assembly"/>
    <property type="evidence" value="ECO:0007669"/>
    <property type="project" value="UniProtKB-UniRule"/>
</dbReference>
<dbReference type="FunFam" id="3.30.160.60:FF:000059">
    <property type="entry name" value="U1 small nuclear ribonucleoprotein C"/>
    <property type="match status" value="1"/>
</dbReference>
<dbReference type="Gene3D" id="3.30.160.60">
    <property type="entry name" value="Classic Zinc Finger"/>
    <property type="match status" value="1"/>
</dbReference>
<dbReference type="HAMAP" id="MF_03153">
    <property type="entry name" value="U1_C"/>
    <property type="match status" value="1"/>
</dbReference>
<dbReference type="InterPro" id="IPR000690">
    <property type="entry name" value="Matrin/U1-C_Znf_C2H2"/>
</dbReference>
<dbReference type="InterPro" id="IPR013085">
    <property type="entry name" value="U1-CZ_Znf_C2H2"/>
</dbReference>
<dbReference type="InterPro" id="IPR017340">
    <property type="entry name" value="U1_snRNP-C"/>
</dbReference>
<dbReference type="InterPro" id="IPR036236">
    <property type="entry name" value="Znf_C2H2_sf"/>
</dbReference>
<dbReference type="PANTHER" id="PTHR31148">
    <property type="entry name" value="U1 SMALL NUCLEAR RIBONUCLEOPROTEIN C"/>
    <property type="match status" value="1"/>
</dbReference>
<dbReference type="PANTHER" id="PTHR31148:SF1">
    <property type="entry name" value="U1 SMALL NUCLEAR RIBONUCLEOPROTEIN C"/>
    <property type="match status" value="1"/>
</dbReference>
<dbReference type="Pfam" id="PF06220">
    <property type="entry name" value="zf-U1"/>
    <property type="match status" value="1"/>
</dbReference>
<dbReference type="SUPFAM" id="SSF57667">
    <property type="entry name" value="beta-beta-alpha zinc fingers"/>
    <property type="match status" value="1"/>
</dbReference>
<dbReference type="PROSITE" id="PS50171">
    <property type="entry name" value="ZF_MATRIN"/>
    <property type="match status" value="1"/>
</dbReference>
<evidence type="ECO:0000255" key="1">
    <source>
        <dbReference type="HAMAP-Rule" id="MF_03153"/>
    </source>
</evidence>
<evidence type="ECO:0000256" key="2">
    <source>
        <dbReference type="SAM" id="MobiDB-lite"/>
    </source>
</evidence>
<organism>
    <name type="scientific">Ajellomyces capsulatus (strain G186AR / H82 / ATCC MYA-2454 / RMSCC 2432)</name>
    <name type="common">Darling's disease fungus</name>
    <name type="synonym">Histoplasma capsulatum</name>
    <dbReference type="NCBI Taxonomy" id="447093"/>
    <lineage>
        <taxon>Eukaryota</taxon>
        <taxon>Fungi</taxon>
        <taxon>Dikarya</taxon>
        <taxon>Ascomycota</taxon>
        <taxon>Pezizomycotina</taxon>
        <taxon>Eurotiomycetes</taxon>
        <taxon>Eurotiomycetidae</taxon>
        <taxon>Onygenales</taxon>
        <taxon>Ajellomycetaceae</taxon>
        <taxon>Histoplasma</taxon>
    </lineage>
</organism>
<accession>C0NN85</accession>
<reference key="1">
    <citation type="submission" date="2009-02" db="EMBL/GenBank/DDBJ databases">
        <title>The genome sequence of Ajellomyces capsulatus strain G186AR.</title>
        <authorList>
            <person name="Champion M."/>
            <person name="Cuomo C.A."/>
            <person name="Ma L.-J."/>
            <person name="Henn M.R."/>
            <person name="Sil A."/>
            <person name="Goldman B."/>
            <person name="Young S.K."/>
            <person name="Kodira C.D."/>
            <person name="Zeng Q."/>
            <person name="Koehrsen M."/>
            <person name="Alvarado L."/>
            <person name="Berlin A."/>
            <person name="Borenstein D."/>
            <person name="Chen Z."/>
            <person name="Engels R."/>
            <person name="Freedman E."/>
            <person name="Gellesch M."/>
            <person name="Goldberg J."/>
            <person name="Griggs A."/>
            <person name="Gujja S."/>
            <person name="Heiman D."/>
            <person name="Hepburn T."/>
            <person name="Howarth C."/>
            <person name="Jen D."/>
            <person name="Larson L."/>
            <person name="Lewis B."/>
            <person name="Mehta T."/>
            <person name="Park D."/>
            <person name="Pearson M."/>
            <person name="Roberts A."/>
            <person name="Saif S."/>
            <person name="Shea T."/>
            <person name="Shenoy N."/>
            <person name="Sisk P."/>
            <person name="Stolte C."/>
            <person name="Sykes S."/>
            <person name="Walk T."/>
            <person name="White J."/>
            <person name="Yandava C."/>
            <person name="Klein B."/>
            <person name="McEwen J.G."/>
            <person name="Puccia R."/>
            <person name="Goldman G.H."/>
            <person name="Felipe M.S."/>
            <person name="Nino-Vega G."/>
            <person name="San-Blas G."/>
            <person name="Taylor J."/>
            <person name="Mendoza L."/>
            <person name="Galagan J.E."/>
            <person name="Nusbaum C."/>
            <person name="Birren B.W."/>
        </authorList>
    </citation>
    <scope>NUCLEOTIDE SEQUENCE [LARGE SCALE GENOMIC DNA]</scope>
    <source>
        <strain>G186AR / H82 / ATCC MYA-2454 / RMSCC 2432</strain>
    </source>
</reference>
<name>RU1C_AJECG</name>
<gene>
    <name type="ORF">HCBG_04212</name>
</gene>
<sequence length="242" mass="24437">MNYLGDYCDVYLTHDSMSVRKAHNSGRNHLRNVVEYYQEIGHEKAQSVIDSITNSYAAEGQASSNPMLQQPGAPGAYPPPAFGFPGRPGMLPPPPPFGMPGAPPGAPPGGMIPLPGGRGMPPFPPPPPFGGTSGGPPMPGDLPPPPLPNMPSGNIPFPPPNGFPPNFQFPPPGAAGFPPPPIPGQGQTQSTSPGPGATGTPVPPPGFPLPGAPPLGQSAGITPPPGVPQKPASSPGPSQEGK</sequence>